<sequence length="93" mass="9638">GWPAYPGSNGIRSSVCQKKLGCGSKNLASLGVCKAFCPGRKRFWQKCGKNGSSGKGSRICNPVPAHAVEKAGKGLIKVTDMAVAAIAKYAGKK</sequence>
<dbReference type="EMBL" id="KT693316">
    <property type="protein sequence ID" value="ALI86907.1"/>
    <property type="molecule type" value="mRNA"/>
</dbReference>
<dbReference type="GO" id="GO:0005576">
    <property type="term" value="C:extracellular region"/>
    <property type="evidence" value="ECO:0007669"/>
    <property type="project" value="UniProtKB-SubCell"/>
</dbReference>
<dbReference type="GO" id="GO:0090729">
    <property type="term" value="F:toxin activity"/>
    <property type="evidence" value="ECO:0007669"/>
    <property type="project" value="UniProtKB-KW"/>
</dbReference>
<dbReference type="GO" id="GO:0031640">
    <property type="term" value="P:killing of cells of another organism"/>
    <property type="evidence" value="ECO:0007669"/>
    <property type="project" value="UniProtKB-KW"/>
</dbReference>
<keyword id="KW-0204">Cytolysis</keyword>
<keyword id="KW-1015">Disulfide bond</keyword>
<keyword id="KW-0354">Hemolysis</keyword>
<keyword id="KW-0964">Secreted</keyword>
<keyword id="KW-0800">Toxin</keyword>
<accession>A0A0P0BZQ8</accession>
<proteinExistence type="inferred from homology"/>
<comment type="function">
    <text evidence="1">Cytolysin that shows hemolytic activity (on bovine erythrocytes, HC(50)=5.75 mg/ml). This hemolytic activity is completely inhibited by small unilamelar vesicles composed of PC/PG, PC/PI and PC/PS in 1:1 molar ratios (with at least 100 mg/ml concentration).</text>
</comment>
<comment type="subcellular location">
    <subcellularLocation>
        <location evidence="5">Secreted</location>
    </subcellularLocation>
</comment>
<comment type="tissue specificity">
    <text evidence="5">Localized within the skin and proboscis and are most readily isolated from body mucus secretions.</text>
</comment>
<comment type="similarity">
    <text evidence="4">Belongs to the worm cytolysin family.</text>
</comment>
<name>CXP3_PARCG</name>
<reference evidence="6" key="1">
    <citation type="journal article" date="2015" name="Toxicon">
        <title>Recombinant expression and predicted structure of parborlysin, a cytolytic protein from the Antarctic heteronemertine Parborlasia corrugatus.</title>
        <authorList>
            <person name="Butala M."/>
            <person name="Sega D."/>
            <person name="Tomc B."/>
            <person name="Podlesek Z."/>
            <person name="Kem W.R."/>
            <person name="Kupper F.C."/>
            <person name="Turk T."/>
        </authorList>
    </citation>
    <scope>NUCLEOTIDE SEQUENCE [MRNA]</scope>
</reference>
<feature type="chain" id="PRO_0000454512" description="Parbolysin P3" evidence="5">
    <location>
        <begin position="1"/>
        <end position="93"/>
    </location>
</feature>
<feature type="disulfide bond" evidence="2">
    <location>
        <begin position="16"/>
        <end position="37"/>
    </location>
</feature>
<feature type="disulfide bond" evidence="2">
    <location>
        <begin position="22"/>
        <end position="33"/>
    </location>
</feature>
<feature type="disulfide bond" evidence="2">
    <location>
        <begin position="47"/>
        <end position="60"/>
    </location>
</feature>
<protein>
    <recommendedName>
        <fullName evidence="3">Parbolysin P3</fullName>
    </recommendedName>
    <alternativeName>
        <fullName>Parbolysin 3</fullName>
    </alternativeName>
</protein>
<evidence type="ECO:0000250" key="1">
    <source>
        <dbReference type="UniProtKB" id="A0A0N7HUN6"/>
    </source>
</evidence>
<evidence type="ECO:0000250" key="2">
    <source>
        <dbReference type="UniProtKB" id="P01527"/>
    </source>
</evidence>
<evidence type="ECO:0000303" key="3">
    <source>
    </source>
</evidence>
<evidence type="ECO:0000305" key="4"/>
<evidence type="ECO:0000305" key="5">
    <source>
    </source>
</evidence>
<evidence type="ECO:0000312" key="6">
    <source>
        <dbReference type="EMBL" id="ALI86907.1"/>
    </source>
</evidence>
<organism>
    <name type="scientific">Parborlasia corrugatus</name>
    <name type="common">Antarctic nemertean worm</name>
    <dbReference type="NCBI Taxonomy" id="187802"/>
    <lineage>
        <taxon>Eukaryota</taxon>
        <taxon>Metazoa</taxon>
        <taxon>Spiralia</taxon>
        <taxon>Lophotrochozoa</taxon>
        <taxon>Nemertea</taxon>
        <taxon>Pilidiophora</taxon>
        <taxon>Heteronemertea</taxon>
        <taxon>Lineidae</taxon>
        <taxon>Parborlasia</taxon>
    </lineage>
</organism>